<evidence type="ECO:0000250" key="1"/>
<reference key="1">
    <citation type="journal article" date="1999" name="NeuroReport">
        <title>The function and expression of sproutin, a novel neurite outgrowth factor.</title>
        <authorList>
            <person name="Tohda C."/>
            <person name="Jacobowitz D.M."/>
        </authorList>
    </citation>
    <scope>PROTEIN SEQUENCE</scope>
    <source>
        <strain>Sprague-Dawley</strain>
        <tissue>Brain</tissue>
    </source>
</reference>
<keyword id="KW-0903">Direct protein sequencing</keyword>
<keyword id="KW-0339">Growth factor</keyword>
<keyword id="KW-0597">Phosphoprotein</keyword>
<keyword id="KW-1185">Reference proteome</keyword>
<organism>
    <name type="scientific">Rattus norvegicus</name>
    <name type="common">Rat</name>
    <dbReference type="NCBI Taxonomy" id="10116"/>
    <lineage>
        <taxon>Eukaryota</taxon>
        <taxon>Metazoa</taxon>
        <taxon>Chordata</taxon>
        <taxon>Craniata</taxon>
        <taxon>Vertebrata</taxon>
        <taxon>Euteleostomi</taxon>
        <taxon>Mammalia</taxon>
        <taxon>Eutheria</taxon>
        <taxon>Euarchontoglires</taxon>
        <taxon>Glires</taxon>
        <taxon>Rodentia</taxon>
        <taxon>Myomorpha</taxon>
        <taxon>Muroidea</taxon>
        <taxon>Muridae</taxon>
        <taxon>Murinae</taxon>
        <taxon>Rattus</taxon>
    </lineage>
</organism>
<comment type="function">
    <text>Neurite outgrowth factor.</text>
</comment>
<comment type="tissue specificity">
    <text>Brain.</text>
</comment>
<dbReference type="STRING" id="10116.ENSRNOP00000035873"/>
<dbReference type="PaxDb" id="10116-ENSRNOP00000035873"/>
<dbReference type="Ensembl" id="ENSRNOT00000030413.2">
    <property type="protein sequence ID" value="ENSRNOP00000035873.1"/>
    <property type="gene ID" value="ENSRNOG00000023090.2"/>
</dbReference>
<dbReference type="GeneTree" id="ENSGT01050000245777"/>
<dbReference type="HOGENOM" id="CLU_3124607_0_0_1"/>
<dbReference type="InParanoid" id="P81728"/>
<dbReference type="PRO" id="PR:P81728"/>
<dbReference type="Proteomes" id="UP000002494">
    <property type="component" value="Chromosome 3"/>
</dbReference>
<dbReference type="Bgee" id="ENSRNOG00000023090">
    <property type="expression patterns" value="Expressed in spleen and 4 other cell types or tissues"/>
</dbReference>
<dbReference type="GO" id="GO:0008083">
    <property type="term" value="F:growth factor activity"/>
    <property type="evidence" value="ECO:0007669"/>
    <property type="project" value="UniProtKB-KW"/>
</dbReference>
<sequence length="50" mass="5338">MVDLWPVSTRPRVLFRAAPSLLNSASAASMLWAELIAMAPSIPSALPPFS</sequence>
<feature type="chain" id="PRO_0000072153" description="Sproutin">
    <location>
        <begin position="1"/>
        <end position="50"/>
    </location>
</feature>
<feature type="modified residue" description="Phosphoserine; by PKC" evidence="1">
    <location>
        <position position="8"/>
    </location>
</feature>
<protein>
    <recommendedName>
        <fullName>Sproutin</fullName>
    </recommendedName>
    <alternativeName>
        <fullName>TA20</fullName>
    </alternativeName>
</protein>
<proteinExistence type="evidence at protein level"/>
<name>SPRT_RAT</name>
<accession>P81728</accession>